<accession>Q87L72</accession>
<name>RS6_VIBPA</name>
<reference key="1">
    <citation type="journal article" date="2003" name="Lancet">
        <title>Genome sequence of Vibrio parahaemolyticus: a pathogenic mechanism distinct from that of V. cholerae.</title>
        <authorList>
            <person name="Makino K."/>
            <person name="Oshima K."/>
            <person name="Kurokawa K."/>
            <person name="Yokoyama K."/>
            <person name="Uda T."/>
            <person name="Tagomori K."/>
            <person name="Iijima Y."/>
            <person name="Najima M."/>
            <person name="Nakano M."/>
            <person name="Yamashita A."/>
            <person name="Kubota Y."/>
            <person name="Kimura S."/>
            <person name="Yasunaga T."/>
            <person name="Honda T."/>
            <person name="Shinagawa H."/>
            <person name="Hattori M."/>
            <person name="Iida T."/>
        </authorList>
    </citation>
    <scope>NUCLEOTIDE SEQUENCE [LARGE SCALE GENOMIC DNA]</scope>
    <source>
        <strain>RIMD 2210633</strain>
    </source>
</reference>
<protein>
    <recommendedName>
        <fullName evidence="1">Small ribosomal subunit protein bS6</fullName>
    </recommendedName>
    <alternativeName>
        <fullName evidence="3">30S ribosomal protein S6</fullName>
    </alternativeName>
</protein>
<proteinExistence type="inferred from homology"/>
<comment type="function">
    <text evidence="1">Binds together with bS18 to 16S ribosomal RNA.</text>
</comment>
<comment type="similarity">
    <text evidence="1">Belongs to the bacterial ribosomal protein bS6 family.</text>
</comment>
<keyword id="KW-0687">Ribonucleoprotein</keyword>
<keyword id="KW-0689">Ribosomal protein</keyword>
<keyword id="KW-0694">RNA-binding</keyword>
<keyword id="KW-0699">rRNA-binding</keyword>
<feature type="chain" id="PRO_0000176872" description="Small ribosomal subunit protein bS6">
    <location>
        <begin position="1"/>
        <end position="129"/>
    </location>
</feature>
<feature type="region of interest" description="Disordered" evidence="2">
    <location>
        <begin position="100"/>
        <end position="129"/>
    </location>
</feature>
<feature type="compositionally biased region" description="Basic and acidic residues" evidence="2">
    <location>
        <begin position="104"/>
        <end position="129"/>
    </location>
</feature>
<gene>
    <name evidence="1" type="primary">rpsF</name>
    <name type="ordered locus">VP2740</name>
</gene>
<sequence>MRHYEIVFMVHPDQSEQVAGMIERYTGSITEAGGKIHRLEDWGRRQLAYPINKLHKAHYVLMNVEADQAVIDELETAFRFNDAVLRNMIMRTKAAITEQSIMLKQKEERAPRREERSEAKPEAKSEAAE</sequence>
<dbReference type="EMBL" id="BA000031">
    <property type="protein sequence ID" value="BAC61003.1"/>
    <property type="molecule type" value="Genomic_DNA"/>
</dbReference>
<dbReference type="RefSeq" id="NP_799119.1">
    <property type="nucleotide sequence ID" value="NC_004603.1"/>
</dbReference>
<dbReference type="RefSeq" id="WP_005381299.1">
    <property type="nucleotide sequence ID" value="NC_004603.1"/>
</dbReference>
<dbReference type="SMR" id="Q87L72"/>
<dbReference type="GeneID" id="75166447"/>
<dbReference type="KEGG" id="vpa:VP2740"/>
<dbReference type="PATRIC" id="fig|223926.6.peg.2637"/>
<dbReference type="eggNOG" id="COG0360">
    <property type="taxonomic scope" value="Bacteria"/>
</dbReference>
<dbReference type="HOGENOM" id="CLU_113441_6_0_6"/>
<dbReference type="Proteomes" id="UP000002493">
    <property type="component" value="Chromosome 1"/>
</dbReference>
<dbReference type="GO" id="GO:0022627">
    <property type="term" value="C:cytosolic small ribosomal subunit"/>
    <property type="evidence" value="ECO:0007669"/>
    <property type="project" value="TreeGrafter"/>
</dbReference>
<dbReference type="GO" id="GO:0070181">
    <property type="term" value="F:small ribosomal subunit rRNA binding"/>
    <property type="evidence" value="ECO:0007669"/>
    <property type="project" value="TreeGrafter"/>
</dbReference>
<dbReference type="GO" id="GO:0003735">
    <property type="term" value="F:structural constituent of ribosome"/>
    <property type="evidence" value="ECO:0007669"/>
    <property type="project" value="InterPro"/>
</dbReference>
<dbReference type="GO" id="GO:0006412">
    <property type="term" value="P:translation"/>
    <property type="evidence" value="ECO:0007669"/>
    <property type="project" value="UniProtKB-UniRule"/>
</dbReference>
<dbReference type="CDD" id="cd00473">
    <property type="entry name" value="bS6"/>
    <property type="match status" value="1"/>
</dbReference>
<dbReference type="FunFam" id="3.30.70.60:FF:000003">
    <property type="entry name" value="30S ribosomal protein S6"/>
    <property type="match status" value="1"/>
</dbReference>
<dbReference type="Gene3D" id="3.30.70.60">
    <property type="match status" value="1"/>
</dbReference>
<dbReference type="HAMAP" id="MF_00360">
    <property type="entry name" value="Ribosomal_bS6"/>
    <property type="match status" value="1"/>
</dbReference>
<dbReference type="InterPro" id="IPR000529">
    <property type="entry name" value="Ribosomal_bS6"/>
</dbReference>
<dbReference type="InterPro" id="IPR020815">
    <property type="entry name" value="Ribosomal_bS6_CS"/>
</dbReference>
<dbReference type="InterPro" id="IPR035980">
    <property type="entry name" value="Ribosomal_bS6_sf"/>
</dbReference>
<dbReference type="InterPro" id="IPR020814">
    <property type="entry name" value="Ribosomal_S6_plastid/chlpt"/>
</dbReference>
<dbReference type="InterPro" id="IPR014717">
    <property type="entry name" value="Transl_elong_EF1B/ribsomal_bS6"/>
</dbReference>
<dbReference type="NCBIfam" id="TIGR00166">
    <property type="entry name" value="S6"/>
    <property type="match status" value="1"/>
</dbReference>
<dbReference type="PANTHER" id="PTHR21011">
    <property type="entry name" value="MITOCHONDRIAL 28S RIBOSOMAL PROTEIN S6"/>
    <property type="match status" value="1"/>
</dbReference>
<dbReference type="PANTHER" id="PTHR21011:SF1">
    <property type="entry name" value="SMALL RIBOSOMAL SUBUNIT PROTEIN BS6M"/>
    <property type="match status" value="1"/>
</dbReference>
<dbReference type="Pfam" id="PF01250">
    <property type="entry name" value="Ribosomal_S6"/>
    <property type="match status" value="1"/>
</dbReference>
<dbReference type="SUPFAM" id="SSF54995">
    <property type="entry name" value="Ribosomal protein S6"/>
    <property type="match status" value="1"/>
</dbReference>
<dbReference type="PROSITE" id="PS01048">
    <property type="entry name" value="RIBOSOMAL_S6"/>
    <property type="match status" value="1"/>
</dbReference>
<organism>
    <name type="scientific">Vibrio parahaemolyticus serotype O3:K6 (strain RIMD 2210633)</name>
    <dbReference type="NCBI Taxonomy" id="223926"/>
    <lineage>
        <taxon>Bacteria</taxon>
        <taxon>Pseudomonadati</taxon>
        <taxon>Pseudomonadota</taxon>
        <taxon>Gammaproteobacteria</taxon>
        <taxon>Vibrionales</taxon>
        <taxon>Vibrionaceae</taxon>
        <taxon>Vibrio</taxon>
    </lineage>
</organism>
<evidence type="ECO:0000255" key="1">
    <source>
        <dbReference type="HAMAP-Rule" id="MF_00360"/>
    </source>
</evidence>
<evidence type="ECO:0000256" key="2">
    <source>
        <dbReference type="SAM" id="MobiDB-lite"/>
    </source>
</evidence>
<evidence type="ECO:0000305" key="3"/>